<keyword id="KW-0934">Plastid</keyword>
<keyword id="KW-0687">Ribonucleoprotein</keyword>
<keyword id="KW-0689">Ribosomal protein</keyword>
<keyword id="KW-0694">RNA-binding</keyword>
<keyword id="KW-0699">rRNA-binding</keyword>
<comment type="function">
    <text evidence="1">Protein S19 forms a complex with S13 that binds strongly to the 16S ribosomal RNA.</text>
</comment>
<comment type="subcellular location">
    <subcellularLocation>
        <location>Plastid</location>
    </subcellularLocation>
</comment>
<comment type="similarity">
    <text evidence="1">Belongs to the universal ribosomal protein uS19 family.</text>
</comment>
<comment type="caution">
    <text evidence="2">Young tissue from this organism is photosynthetic and contains some thylakoids, although the photosynthetic activity does not exceed the light compensation point.</text>
</comment>
<organism>
    <name type="scientific">Cuscuta reflexa</name>
    <name type="common">Southern Asian dodder</name>
    <dbReference type="NCBI Taxonomy" id="4129"/>
    <lineage>
        <taxon>Eukaryota</taxon>
        <taxon>Viridiplantae</taxon>
        <taxon>Streptophyta</taxon>
        <taxon>Embryophyta</taxon>
        <taxon>Tracheophyta</taxon>
        <taxon>Spermatophyta</taxon>
        <taxon>Magnoliopsida</taxon>
        <taxon>eudicotyledons</taxon>
        <taxon>Gunneridae</taxon>
        <taxon>Pentapetalae</taxon>
        <taxon>asterids</taxon>
        <taxon>lamiids</taxon>
        <taxon>Solanales</taxon>
        <taxon>Convolvulaceae</taxon>
        <taxon>Cuscuteae</taxon>
        <taxon>Cuscuta</taxon>
        <taxon>Cuscuta subgen. Monogynella</taxon>
    </lineage>
</organism>
<geneLocation type="plastid"/>
<protein>
    <recommendedName>
        <fullName evidence="1">Small ribosomal subunit protein uS19c</fullName>
    </recommendedName>
    <alternativeName>
        <fullName evidence="2">30S ribosomal protein S19, plastid</fullName>
    </alternativeName>
</protein>
<reference key="1">
    <citation type="journal article" date="2007" name="BMC Plant Biol.">
        <title>Complete DNA sequences of the plastid genomes of two parasitic flowering plant species, Cuscuta reflexa and Cuscuta gronovii.</title>
        <authorList>
            <person name="Funk H.T."/>
            <person name="Berg S."/>
            <person name="Krupinska K."/>
            <person name="Maier U.-G."/>
            <person name="Krause K."/>
        </authorList>
    </citation>
    <scope>NUCLEOTIDE SEQUENCE [LARGE SCALE GENOMIC DNA]</scope>
</reference>
<evidence type="ECO:0000255" key="1">
    <source>
        <dbReference type="HAMAP-Rule" id="MF_00531"/>
    </source>
</evidence>
<evidence type="ECO:0000305" key="2"/>
<sequence>MARSLKKNPFVAKNLLKKIYKLNIKTEKEIIITWSRGSTIIPIMVGHTIAIHTGKEHLPIYIMDHMVGHKLGEFAFTLNFRGHAKTDNRSRR</sequence>
<accession>A7M9A3</accession>
<name>RR19_CUSRE</name>
<dbReference type="EMBL" id="AM711640">
    <property type="protein sequence ID" value="CAM98431.1"/>
    <property type="molecule type" value="Genomic_DNA"/>
</dbReference>
<dbReference type="RefSeq" id="YP_001430144.1">
    <property type="nucleotide sequence ID" value="NC_009766.1"/>
</dbReference>
<dbReference type="SMR" id="A7M9A3"/>
<dbReference type="GeneID" id="5536638"/>
<dbReference type="GO" id="GO:0005763">
    <property type="term" value="C:mitochondrial small ribosomal subunit"/>
    <property type="evidence" value="ECO:0007669"/>
    <property type="project" value="TreeGrafter"/>
</dbReference>
<dbReference type="GO" id="GO:0009536">
    <property type="term" value="C:plastid"/>
    <property type="evidence" value="ECO:0007669"/>
    <property type="project" value="UniProtKB-SubCell"/>
</dbReference>
<dbReference type="GO" id="GO:0019843">
    <property type="term" value="F:rRNA binding"/>
    <property type="evidence" value="ECO:0007669"/>
    <property type="project" value="UniProtKB-KW"/>
</dbReference>
<dbReference type="GO" id="GO:0003735">
    <property type="term" value="F:structural constituent of ribosome"/>
    <property type="evidence" value="ECO:0007669"/>
    <property type="project" value="InterPro"/>
</dbReference>
<dbReference type="GO" id="GO:0000028">
    <property type="term" value="P:ribosomal small subunit assembly"/>
    <property type="evidence" value="ECO:0007669"/>
    <property type="project" value="TreeGrafter"/>
</dbReference>
<dbReference type="GO" id="GO:0006412">
    <property type="term" value="P:translation"/>
    <property type="evidence" value="ECO:0007669"/>
    <property type="project" value="InterPro"/>
</dbReference>
<dbReference type="FunFam" id="3.30.860.10:FF:000001">
    <property type="entry name" value="30S ribosomal protein S19"/>
    <property type="match status" value="1"/>
</dbReference>
<dbReference type="Gene3D" id="3.30.860.10">
    <property type="entry name" value="30s Ribosomal Protein S19, Chain A"/>
    <property type="match status" value="1"/>
</dbReference>
<dbReference type="HAMAP" id="MF_00531">
    <property type="entry name" value="Ribosomal_uS19"/>
    <property type="match status" value="1"/>
</dbReference>
<dbReference type="InterPro" id="IPR002222">
    <property type="entry name" value="Ribosomal_uS19"/>
</dbReference>
<dbReference type="InterPro" id="IPR005732">
    <property type="entry name" value="Ribosomal_uS19_bac-type"/>
</dbReference>
<dbReference type="InterPro" id="IPR020934">
    <property type="entry name" value="Ribosomal_uS19_CS"/>
</dbReference>
<dbReference type="InterPro" id="IPR023575">
    <property type="entry name" value="Ribosomal_uS19_SF"/>
</dbReference>
<dbReference type="NCBIfam" id="TIGR01050">
    <property type="entry name" value="rpsS_bact"/>
    <property type="match status" value="1"/>
</dbReference>
<dbReference type="PANTHER" id="PTHR11880">
    <property type="entry name" value="RIBOSOMAL PROTEIN S19P FAMILY MEMBER"/>
    <property type="match status" value="1"/>
</dbReference>
<dbReference type="PANTHER" id="PTHR11880:SF8">
    <property type="entry name" value="SMALL RIBOSOMAL SUBUNIT PROTEIN US19M"/>
    <property type="match status" value="1"/>
</dbReference>
<dbReference type="Pfam" id="PF00203">
    <property type="entry name" value="Ribosomal_S19"/>
    <property type="match status" value="1"/>
</dbReference>
<dbReference type="PIRSF" id="PIRSF002144">
    <property type="entry name" value="Ribosomal_S19"/>
    <property type="match status" value="1"/>
</dbReference>
<dbReference type="PRINTS" id="PR00975">
    <property type="entry name" value="RIBOSOMALS19"/>
</dbReference>
<dbReference type="SUPFAM" id="SSF54570">
    <property type="entry name" value="Ribosomal protein S19"/>
    <property type="match status" value="1"/>
</dbReference>
<dbReference type="PROSITE" id="PS00323">
    <property type="entry name" value="RIBOSOMAL_S19"/>
    <property type="match status" value="1"/>
</dbReference>
<proteinExistence type="inferred from homology"/>
<gene>
    <name evidence="1" type="primary">rps19</name>
</gene>
<feature type="chain" id="PRO_0000354349" description="Small ribosomal subunit protein uS19c">
    <location>
        <begin position="1"/>
        <end position="92"/>
    </location>
</feature>